<sequence>MGSSKSKPKDPSQRRRSLEPPDSTHHGGFPASQTPNKTAAPDTHRTPSRSFGTVATEPKLFGGFNTSDTVTSPQRAGALAGGVTTFVALYDYESRTETDLSFKKGERLQIVNNTEGDWWLAHSLTTGQTGYIPSNYVAPSDSIQAEEWYFGKITRRESERLLLNPENPRGTFLVRESETTKGAYCLSVSDFDNAKGLNVKHYKIRKLDSGGFYITSRTQFSSLQQLVAYYSKHADGLCHRLTNVCPTSKPQTQGLAKDAWEIPRESLRLEVKLGQGCFGEVWMGTWNGTTRVAIKTLKPGTMSPEAFLQEAQVMKKLRHEKLVQLYAVVSEEPIYIVTEYMSKGSLLDFLKGEMGKYLRLPQLVDMAAQIASGMAYVERMNYVHRDLRAANILVGENLVCKVADFGLARLIEDNEYTARQGAKFPIKWTAPEAALYGRFTIKSDVWSFGILLTELTTKGRVPYPGMVNREVLDQVERGYRMPCPPECPESLHDLMCQCWRKDPEERPTFEYLQAFLEDYFTSTEPPVPAWREPIGLELLLAPEASLWGTGAWLRAEGPRFGEQPQSRMWHGEVSGAPSLIKTVLGHP</sequence>
<organismHost>
    <name type="scientific">Galliformes</name>
    <dbReference type="NCBI Taxonomy" id="8976"/>
</organismHost>
<feature type="initiator methionine" description="Removed; by host" evidence="1">
    <location>
        <position position="1"/>
    </location>
</feature>
<feature type="chain" id="PRO_0000088148" description="Tyrosine-protein kinase transforming protein Src">
    <location>
        <begin position="2"/>
        <end position="587"/>
    </location>
</feature>
<feature type="domain" description="SH3" evidence="4">
    <location>
        <begin position="81"/>
        <end position="142"/>
    </location>
</feature>
<feature type="domain" description="SH2" evidence="3">
    <location>
        <begin position="148"/>
        <end position="245"/>
    </location>
</feature>
<feature type="domain" description="Protein kinase" evidence="2">
    <location>
        <begin position="267"/>
        <end position="520"/>
    </location>
</feature>
<feature type="region of interest" description="Disordered" evidence="6">
    <location>
        <begin position="1"/>
        <end position="58"/>
    </location>
</feature>
<feature type="compositionally biased region" description="Basic and acidic residues" evidence="6">
    <location>
        <begin position="7"/>
        <end position="25"/>
    </location>
</feature>
<feature type="active site" description="Proton acceptor" evidence="2 5">
    <location>
        <position position="386"/>
    </location>
</feature>
<feature type="binding site" evidence="2">
    <location>
        <begin position="273"/>
        <end position="281"/>
    </location>
    <ligand>
        <name>ATP</name>
        <dbReference type="ChEBI" id="CHEBI:30616"/>
    </ligand>
</feature>
<feature type="binding site" evidence="2">
    <location>
        <position position="295"/>
    </location>
    <ligand>
        <name>ATP</name>
        <dbReference type="ChEBI" id="CHEBI:30616"/>
    </ligand>
</feature>
<feature type="modified residue" description="Phosphotyrosine; by autocatalysis" evidence="1">
    <location>
        <position position="416"/>
    </location>
</feature>
<feature type="lipid moiety-binding region" description="N-myristoyl glycine; by host" evidence="1">
    <location>
        <position position="2"/>
    </location>
</feature>
<accession>P15054</accession>
<keyword id="KW-0067">ATP-binding</keyword>
<keyword id="KW-0418">Kinase</keyword>
<keyword id="KW-0449">Lipoprotein</keyword>
<keyword id="KW-0519">Myristate</keyword>
<keyword id="KW-0547">Nucleotide-binding</keyword>
<keyword id="KW-0553">Oncogene</keyword>
<keyword id="KW-0597">Phosphoprotein</keyword>
<keyword id="KW-0727">SH2 domain</keyword>
<keyword id="KW-0728">SH3 domain</keyword>
<keyword id="KW-0808">Transferase</keyword>
<keyword id="KW-0829">Tyrosine-protein kinase</keyword>
<reference key="1">
    <citation type="journal article" date="1989" name="J. Virol.">
        <title>Transduction of the cellular src gene and 3' adjacent sequences in avian sarcoma virus PR2257.</title>
        <authorList>
            <person name="Geryk J."/>
            <person name="Dezelee P."/>
            <person name="Barnier J.V."/>
            <person name="Svoboda J."/>
            <person name="Nehyba J."/>
            <person name="Karakoz I."/>
            <person name="Rynditch A.V."/>
            <person name="Yatsula B.A."/>
            <person name="Calothy G."/>
        </authorList>
    </citation>
    <scope>NUCLEOTIDE SEQUENCE [GENOMIC RNA]</scope>
</reference>
<reference key="2">
    <citation type="submission" date="1992-04" db="EMBL/GenBank/DDBJ databases">
        <authorList>
            <person name="Yatsula B.A."/>
            <person name="Geryk J."/>
            <person name="Svoboda J."/>
            <person name="Rynditch A.V."/>
            <person name="Calothy G."/>
            <person name="Dezelee P."/>
        </authorList>
    </citation>
    <scope>NUCLEOTIDE SEQUENCE [GENOMIC RNA]</scope>
</reference>
<evidence type="ECO:0000250" key="1"/>
<evidence type="ECO:0000255" key="2">
    <source>
        <dbReference type="PROSITE-ProRule" id="PRU00159"/>
    </source>
</evidence>
<evidence type="ECO:0000255" key="3">
    <source>
        <dbReference type="PROSITE-ProRule" id="PRU00191"/>
    </source>
</evidence>
<evidence type="ECO:0000255" key="4">
    <source>
        <dbReference type="PROSITE-ProRule" id="PRU00192"/>
    </source>
</evidence>
<evidence type="ECO:0000255" key="5">
    <source>
        <dbReference type="PROSITE-ProRule" id="PRU10028"/>
    </source>
</evidence>
<evidence type="ECO:0000256" key="6">
    <source>
        <dbReference type="SAM" id="MobiDB-lite"/>
    </source>
</evidence>
<comment type="function">
    <text>This phosphoprotein, required for both the initiation and the maintenance of neoplastic transformation, is a protein kinase that catalyzes the phosphorylation of tyrosine residues in vitro.</text>
</comment>
<comment type="catalytic activity">
    <reaction evidence="5">
        <text>L-tyrosyl-[protein] + ATP = O-phospho-L-tyrosyl-[protein] + ADP + H(+)</text>
        <dbReference type="Rhea" id="RHEA:10596"/>
        <dbReference type="Rhea" id="RHEA-COMP:10136"/>
        <dbReference type="Rhea" id="RHEA-COMP:20101"/>
        <dbReference type="ChEBI" id="CHEBI:15378"/>
        <dbReference type="ChEBI" id="CHEBI:30616"/>
        <dbReference type="ChEBI" id="CHEBI:46858"/>
        <dbReference type="ChEBI" id="CHEBI:61978"/>
        <dbReference type="ChEBI" id="CHEBI:456216"/>
        <dbReference type="EC" id="2.7.10.2"/>
    </reaction>
</comment>
<comment type="PTM">
    <text>The phosphorylated form is termed pp60v-src.</text>
</comment>
<comment type="similarity">
    <text evidence="2">Belongs to the protein kinase superfamily. Tyr protein kinase family. SRC subfamily.</text>
</comment>
<dbReference type="EC" id="2.7.10.2"/>
<dbReference type="EMBL" id="M21526">
    <property type="protein sequence ID" value="AAA42583.1"/>
    <property type="molecule type" value="Genomic_RNA"/>
</dbReference>
<dbReference type="EMBL" id="X51863">
    <property type="protein sequence ID" value="CAA36156.1"/>
    <property type="molecule type" value="Genomic_RNA"/>
</dbReference>
<dbReference type="PIR" id="A30174">
    <property type="entry name" value="TVFVPR"/>
</dbReference>
<dbReference type="SMR" id="P15054"/>
<dbReference type="IntAct" id="P15054">
    <property type="interactions" value="1"/>
</dbReference>
<dbReference type="MINT" id="P15054"/>
<dbReference type="BRENDA" id="2.7.10.2">
    <property type="organism ID" value="600"/>
</dbReference>
<dbReference type="GO" id="GO:0005524">
    <property type="term" value="F:ATP binding"/>
    <property type="evidence" value="ECO:0007669"/>
    <property type="project" value="UniProtKB-KW"/>
</dbReference>
<dbReference type="GO" id="GO:0004715">
    <property type="term" value="F:non-membrane spanning protein tyrosine kinase activity"/>
    <property type="evidence" value="ECO:0007669"/>
    <property type="project" value="UniProtKB-EC"/>
</dbReference>
<dbReference type="CDD" id="cd14203">
    <property type="entry name" value="PTKc_Src_Fyn_like"/>
    <property type="match status" value="1"/>
</dbReference>
<dbReference type="CDD" id="cd10365">
    <property type="entry name" value="SH2_Src_Src"/>
    <property type="match status" value="1"/>
</dbReference>
<dbReference type="CDD" id="cd12008">
    <property type="entry name" value="SH3_Src"/>
    <property type="match status" value="1"/>
</dbReference>
<dbReference type="FunFam" id="1.10.510.10:FF:000553">
    <property type="entry name" value="Tyrosine-protein kinase"/>
    <property type="match status" value="1"/>
</dbReference>
<dbReference type="FunFam" id="2.30.30.40:FF:000083">
    <property type="entry name" value="Tyrosine-protein kinase"/>
    <property type="match status" value="1"/>
</dbReference>
<dbReference type="FunFam" id="3.30.200.20:FF:000016">
    <property type="entry name" value="Tyrosine-protein kinase"/>
    <property type="match status" value="1"/>
</dbReference>
<dbReference type="FunFam" id="3.30.505.10:FF:000001">
    <property type="entry name" value="Tyrosine-protein kinase"/>
    <property type="match status" value="1"/>
</dbReference>
<dbReference type="Gene3D" id="3.30.200.20">
    <property type="entry name" value="Phosphorylase Kinase, domain 1"/>
    <property type="match status" value="1"/>
</dbReference>
<dbReference type="Gene3D" id="3.30.505.10">
    <property type="entry name" value="SH2 domain"/>
    <property type="match status" value="1"/>
</dbReference>
<dbReference type="Gene3D" id="2.30.30.40">
    <property type="entry name" value="SH3 Domains"/>
    <property type="match status" value="1"/>
</dbReference>
<dbReference type="Gene3D" id="1.10.510.10">
    <property type="entry name" value="Transferase(Phosphotransferase) domain 1"/>
    <property type="match status" value="1"/>
</dbReference>
<dbReference type="InterPro" id="IPR011009">
    <property type="entry name" value="Kinase-like_dom_sf"/>
</dbReference>
<dbReference type="InterPro" id="IPR050198">
    <property type="entry name" value="Non-receptor_tyrosine_kinases"/>
</dbReference>
<dbReference type="InterPro" id="IPR000719">
    <property type="entry name" value="Prot_kinase_dom"/>
</dbReference>
<dbReference type="InterPro" id="IPR017441">
    <property type="entry name" value="Protein_kinase_ATP_BS"/>
</dbReference>
<dbReference type="InterPro" id="IPR001245">
    <property type="entry name" value="Ser-Thr/Tyr_kinase_cat_dom"/>
</dbReference>
<dbReference type="InterPro" id="IPR000980">
    <property type="entry name" value="SH2"/>
</dbReference>
<dbReference type="InterPro" id="IPR036860">
    <property type="entry name" value="SH2_dom_sf"/>
</dbReference>
<dbReference type="InterPro" id="IPR036028">
    <property type="entry name" value="SH3-like_dom_sf"/>
</dbReference>
<dbReference type="InterPro" id="IPR001452">
    <property type="entry name" value="SH3_domain"/>
</dbReference>
<dbReference type="InterPro" id="IPR008266">
    <property type="entry name" value="Tyr_kinase_AS"/>
</dbReference>
<dbReference type="InterPro" id="IPR020635">
    <property type="entry name" value="Tyr_kinase_cat_dom"/>
</dbReference>
<dbReference type="PANTHER" id="PTHR24418">
    <property type="entry name" value="TYROSINE-PROTEIN KINASE"/>
    <property type="match status" value="1"/>
</dbReference>
<dbReference type="Pfam" id="PF07714">
    <property type="entry name" value="PK_Tyr_Ser-Thr"/>
    <property type="match status" value="1"/>
</dbReference>
<dbReference type="Pfam" id="PF00017">
    <property type="entry name" value="SH2"/>
    <property type="match status" value="1"/>
</dbReference>
<dbReference type="Pfam" id="PF00018">
    <property type="entry name" value="SH3_1"/>
    <property type="match status" value="1"/>
</dbReference>
<dbReference type="PRINTS" id="PR00401">
    <property type="entry name" value="SH2DOMAIN"/>
</dbReference>
<dbReference type="PRINTS" id="PR00452">
    <property type="entry name" value="SH3DOMAIN"/>
</dbReference>
<dbReference type="PRINTS" id="PR00109">
    <property type="entry name" value="TYRKINASE"/>
</dbReference>
<dbReference type="SMART" id="SM00252">
    <property type="entry name" value="SH2"/>
    <property type="match status" value="1"/>
</dbReference>
<dbReference type="SMART" id="SM00326">
    <property type="entry name" value="SH3"/>
    <property type="match status" value="1"/>
</dbReference>
<dbReference type="SMART" id="SM00219">
    <property type="entry name" value="TyrKc"/>
    <property type="match status" value="1"/>
</dbReference>
<dbReference type="SUPFAM" id="SSF56112">
    <property type="entry name" value="Protein kinase-like (PK-like)"/>
    <property type="match status" value="1"/>
</dbReference>
<dbReference type="SUPFAM" id="SSF55550">
    <property type="entry name" value="SH2 domain"/>
    <property type="match status" value="1"/>
</dbReference>
<dbReference type="SUPFAM" id="SSF50044">
    <property type="entry name" value="SH3-domain"/>
    <property type="match status" value="1"/>
</dbReference>
<dbReference type="PROSITE" id="PS00107">
    <property type="entry name" value="PROTEIN_KINASE_ATP"/>
    <property type="match status" value="1"/>
</dbReference>
<dbReference type="PROSITE" id="PS50011">
    <property type="entry name" value="PROTEIN_KINASE_DOM"/>
    <property type="match status" value="1"/>
</dbReference>
<dbReference type="PROSITE" id="PS00109">
    <property type="entry name" value="PROTEIN_KINASE_TYR"/>
    <property type="match status" value="1"/>
</dbReference>
<dbReference type="PROSITE" id="PS50001">
    <property type="entry name" value="SH2"/>
    <property type="match status" value="1"/>
</dbReference>
<dbReference type="PROSITE" id="PS50002">
    <property type="entry name" value="SH3"/>
    <property type="match status" value="1"/>
</dbReference>
<proteinExistence type="inferred from homology"/>
<gene>
    <name type="primary">V-SRC</name>
</gene>
<protein>
    <recommendedName>
        <fullName>Tyrosine-protein kinase transforming protein Src</fullName>
        <ecNumber>2.7.10.2</ecNumber>
    </recommendedName>
    <alternativeName>
        <fullName>pp60v-src</fullName>
        <shortName>p60-Src</shortName>
        <shortName>v-Src</shortName>
    </alternativeName>
</protein>
<name>SRC_AVIS2</name>
<organism>
    <name type="scientific">Avian sarcoma virus (strain PR2257)</name>
    <dbReference type="NCBI Taxonomy" id="11879"/>
    <lineage>
        <taxon>Viruses</taxon>
        <taxon>Riboviria</taxon>
        <taxon>Pararnavirae</taxon>
        <taxon>Artverviricota</taxon>
        <taxon>Revtraviricetes</taxon>
        <taxon>Ortervirales</taxon>
        <taxon>Retroviridae</taxon>
        <taxon>Orthoretrovirinae</taxon>
        <taxon>Alpharetrovirus</taxon>
        <taxon>Y73 avian sarcoma virus</taxon>
    </lineage>
</organism>